<sequence>MIDADVIVGLEVHCQLDTKSKLFCGCSTDYRDDGPNTHVCPICLGLPGTMPALNKRAIEYAMKVAKALNCTIVPESEFSRKNYFYPDLDKAYQITQYDKPLAQGGYVEIEGDDGKERKIQLTRIHVEEDPGRLVHMGNAERGRYSLVDYNRAGIPLIEIVSEPDMRSPKEARKFLNKLRATLEYLGVFDSEKEGSLRVDANISLRGNERVEVKNITSYKGVEKALTFEVTRQKNLIRRGLPVERETRHYLEARGITQSARSKETENDYRYFPEPDLRPLRVQSWVKDIALPELPDARRERFVTQYSCSLNHARTLTGELKMANFFEGVVSGDRAGLCSLAATWIADTLAGELNYRNMGIDCVDPHRFGSLLAILRAGTITDKSGVEVLRVMLDEQLKGETVETPEAIVARLNLAKTAGDDGALAAAVKEVISENPKAIEDYKAGKNGAINFLVGQVMKKTRGRADPGELNRLVVAALKDGGQ</sequence>
<keyword id="KW-0067">ATP-binding</keyword>
<keyword id="KW-0436">Ligase</keyword>
<keyword id="KW-0547">Nucleotide-binding</keyword>
<keyword id="KW-0648">Protein biosynthesis</keyword>
<keyword id="KW-1185">Reference proteome</keyword>
<evidence type="ECO:0000255" key="1">
    <source>
        <dbReference type="HAMAP-Rule" id="MF_00121"/>
    </source>
</evidence>
<dbReference type="EC" id="6.3.5.-" evidence="1"/>
<dbReference type="EMBL" id="CP000780">
    <property type="protein sequence ID" value="ABS55376.1"/>
    <property type="molecule type" value="Genomic_DNA"/>
</dbReference>
<dbReference type="RefSeq" id="WP_012106400.1">
    <property type="nucleotide sequence ID" value="NC_009712.1"/>
</dbReference>
<dbReference type="SMR" id="A7I6L5"/>
<dbReference type="STRING" id="456442.Mboo_0858"/>
<dbReference type="GeneID" id="5411477"/>
<dbReference type="KEGG" id="mbn:Mboo_0858"/>
<dbReference type="eggNOG" id="arCOG01718">
    <property type="taxonomic scope" value="Archaea"/>
</dbReference>
<dbReference type="HOGENOM" id="CLU_019240_0_1_2"/>
<dbReference type="OrthoDB" id="52755at2157"/>
<dbReference type="Proteomes" id="UP000002408">
    <property type="component" value="Chromosome"/>
</dbReference>
<dbReference type="GO" id="GO:0050566">
    <property type="term" value="F:asparaginyl-tRNA synthase (glutamine-hydrolyzing) activity"/>
    <property type="evidence" value="ECO:0007669"/>
    <property type="project" value="RHEA"/>
</dbReference>
<dbReference type="GO" id="GO:0005524">
    <property type="term" value="F:ATP binding"/>
    <property type="evidence" value="ECO:0007669"/>
    <property type="project" value="UniProtKB-KW"/>
</dbReference>
<dbReference type="GO" id="GO:0050567">
    <property type="term" value="F:glutaminyl-tRNA synthase (glutamine-hydrolyzing) activity"/>
    <property type="evidence" value="ECO:0007669"/>
    <property type="project" value="UniProtKB-UniRule"/>
</dbReference>
<dbReference type="GO" id="GO:0070681">
    <property type="term" value="P:glutaminyl-tRNAGln biosynthesis via transamidation"/>
    <property type="evidence" value="ECO:0007669"/>
    <property type="project" value="TreeGrafter"/>
</dbReference>
<dbReference type="GO" id="GO:0006412">
    <property type="term" value="P:translation"/>
    <property type="evidence" value="ECO:0007669"/>
    <property type="project" value="UniProtKB-UniRule"/>
</dbReference>
<dbReference type="FunFam" id="1.10.10.410:FF:000001">
    <property type="entry name" value="Aspartyl/glutamyl-tRNA(Asn/Gln) amidotransferase subunit B"/>
    <property type="match status" value="1"/>
</dbReference>
<dbReference type="Gene3D" id="1.10.10.410">
    <property type="match status" value="1"/>
</dbReference>
<dbReference type="Gene3D" id="1.10.150.380">
    <property type="entry name" value="GatB domain, N-terminal subdomain"/>
    <property type="match status" value="1"/>
</dbReference>
<dbReference type="HAMAP" id="MF_00121">
    <property type="entry name" value="GatB"/>
    <property type="match status" value="1"/>
</dbReference>
<dbReference type="InterPro" id="IPR017959">
    <property type="entry name" value="Asn/Gln-tRNA_amidoTrfase_suB/E"/>
</dbReference>
<dbReference type="InterPro" id="IPR006075">
    <property type="entry name" value="Asn/Gln-tRNA_Trfase_suB/E_cat"/>
</dbReference>
<dbReference type="InterPro" id="IPR018027">
    <property type="entry name" value="Asn/Gln_amidotransferase"/>
</dbReference>
<dbReference type="InterPro" id="IPR003789">
    <property type="entry name" value="Asn/Gln_tRNA_amidoTrase-B-like"/>
</dbReference>
<dbReference type="InterPro" id="IPR004413">
    <property type="entry name" value="GatB"/>
</dbReference>
<dbReference type="InterPro" id="IPR042114">
    <property type="entry name" value="GatB_C_1"/>
</dbReference>
<dbReference type="InterPro" id="IPR023168">
    <property type="entry name" value="GatB_Yqey_C_2"/>
</dbReference>
<dbReference type="InterPro" id="IPR017958">
    <property type="entry name" value="Gln-tRNA_amidoTrfase_suB_CS"/>
</dbReference>
<dbReference type="InterPro" id="IPR014746">
    <property type="entry name" value="Gln_synth/guanido_kin_cat_dom"/>
</dbReference>
<dbReference type="NCBIfam" id="TIGR00133">
    <property type="entry name" value="gatB"/>
    <property type="match status" value="1"/>
</dbReference>
<dbReference type="NCBIfam" id="NF004012">
    <property type="entry name" value="PRK05477.1-2"/>
    <property type="match status" value="1"/>
</dbReference>
<dbReference type="NCBIfam" id="NF004014">
    <property type="entry name" value="PRK05477.1-4"/>
    <property type="match status" value="1"/>
</dbReference>
<dbReference type="PANTHER" id="PTHR11659">
    <property type="entry name" value="GLUTAMYL-TRNA GLN AMIDOTRANSFERASE SUBUNIT B MITOCHONDRIAL AND PROKARYOTIC PET112-RELATED"/>
    <property type="match status" value="1"/>
</dbReference>
<dbReference type="PANTHER" id="PTHR11659:SF0">
    <property type="entry name" value="GLUTAMYL-TRNA(GLN) AMIDOTRANSFERASE SUBUNIT B, MITOCHONDRIAL"/>
    <property type="match status" value="1"/>
</dbReference>
<dbReference type="Pfam" id="PF02934">
    <property type="entry name" value="GatB_N"/>
    <property type="match status" value="1"/>
</dbReference>
<dbReference type="Pfam" id="PF02637">
    <property type="entry name" value="GatB_Yqey"/>
    <property type="match status" value="1"/>
</dbReference>
<dbReference type="SMART" id="SM00845">
    <property type="entry name" value="GatB_Yqey"/>
    <property type="match status" value="1"/>
</dbReference>
<dbReference type="SUPFAM" id="SSF89095">
    <property type="entry name" value="GatB/YqeY motif"/>
    <property type="match status" value="1"/>
</dbReference>
<dbReference type="SUPFAM" id="SSF55931">
    <property type="entry name" value="Glutamine synthetase/guanido kinase"/>
    <property type="match status" value="1"/>
</dbReference>
<dbReference type="PROSITE" id="PS01234">
    <property type="entry name" value="GATB"/>
    <property type="match status" value="1"/>
</dbReference>
<gene>
    <name evidence="1" type="primary">gatB</name>
    <name type="ordered locus">Mboo_0858</name>
</gene>
<name>GATB_METB6</name>
<organism>
    <name type="scientific">Methanoregula boonei (strain DSM 21154 / JCM 14090 / 6A8)</name>
    <dbReference type="NCBI Taxonomy" id="456442"/>
    <lineage>
        <taxon>Archaea</taxon>
        <taxon>Methanobacteriati</taxon>
        <taxon>Methanobacteriota</taxon>
        <taxon>Stenosarchaea group</taxon>
        <taxon>Methanomicrobia</taxon>
        <taxon>Methanomicrobiales</taxon>
        <taxon>Methanoregulaceae</taxon>
        <taxon>Methanoregula</taxon>
    </lineage>
</organism>
<comment type="function">
    <text evidence="1">Allows the formation of correctly charged Asn-tRNA(Asn) or Gln-tRNA(Gln) through the transamidation of misacylated Asp-tRNA(Asn) or Glu-tRNA(Gln) in organisms which lack either or both of asparaginyl-tRNA or glutaminyl-tRNA synthetases. The reaction takes place in the presence of glutamine and ATP through an activated phospho-Asp-tRNA(Asn) or phospho-Glu-tRNA(Gln).</text>
</comment>
<comment type="catalytic activity">
    <reaction evidence="1">
        <text>L-glutamyl-tRNA(Gln) + L-glutamine + ATP + H2O = L-glutaminyl-tRNA(Gln) + L-glutamate + ADP + phosphate + H(+)</text>
        <dbReference type="Rhea" id="RHEA:17521"/>
        <dbReference type="Rhea" id="RHEA-COMP:9681"/>
        <dbReference type="Rhea" id="RHEA-COMP:9684"/>
        <dbReference type="ChEBI" id="CHEBI:15377"/>
        <dbReference type="ChEBI" id="CHEBI:15378"/>
        <dbReference type="ChEBI" id="CHEBI:29985"/>
        <dbReference type="ChEBI" id="CHEBI:30616"/>
        <dbReference type="ChEBI" id="CHEBI:43474"/>
        <dbReference type="ChEBI" id="CHEBI:58359"/>
        <dbReference type="ChEBI" id="CHEBI:78520"/>
        <dbReference type="ChEBI" id="CHEBI:78521"/>
        <dbReference type="ChEBI" id="CHEBI:456216"/>
    </reaction>
</comment>
<comment type="catalytic activity">
    <reaction evidence="1">
        <text>L-aspartyl-tRNA(Asn) + L-glutamine + ATP + H2O = L-asparaginyl-tRNA(Asn) + L-glutamate + ADP + phosphate + 2 H(+)</text>
        <dbReference type="Rhea" id="RHEA:14513"/>
        <dbReference type="Rhea" id="RHEA-COMP:9674"/>
        <dbReference type="Rhea" id="RHEA-COMP:9677"/>
        <dbReference type="ChEBI" id="CHEBI:15377"/>
        <dbReference type="ChEBI" id="CHEBI:15378"/>
        <dbReference type="ChEBI" id="CHEBI:29985"/>
        <dbReference type="ChEBI" id="CHEBI:30616"/>
        <dbReference type="ChEBI" id="CHEBI:43474"/>
        <dbReference type="ChEBI" id="CHEBI:58359"/>
        <dbReference type="ChEBI" id="CHEBI:78515"/>
        <dbReference type="ChEBI" id="CHEBI:78516"/>
        <dbReference type="ChEBI" id="CHEBI:456216"/>
    </reaction>
</comment>
<comment type="subunit">
    <text evidence="1">Heterotrimer of A, B and C subunits.</text>
</comment>
<comment type="similarity">
    <text evidence="1">Belongs to the GatB/GatE family. GatB subfamily.</text>
</comment>
<accession>A7I6L5</accession>
<reference key="1">
    <citation type="journal article" date="2015" name="Microbiology">
        <title>Genome of Methanoregula boonei 6A8 reveals adaptations to oligotrophic peatland environments.</title>
        <authorList>
            <person name="Braeuer S."/>
            <person name="Cadillo-Quiroz H."/>
            <person name="Kyrpides N."/>
            <person name="Woyke T."/>
            <person name="Goodwin L."/>
            <person name="Detter C."/>
            <person name="Podell S."/>
            <person name="Yavitt J.B."/>
            <person name="Zinder S.H."/>
        </authorList>
    </citation>
    <scope>NUCLEOTIDE SEQUENCE [LARGE SCALE GENOMIC DNA]</scope>
    <source>
        <strain>DSM 21154 / JCM 14090 / 6A8</strain>
    </source>
</reference>
<proteinExistence type="inferred from homology"/>
<feature type="chain" id="PRO_1000015992" description="Aspartyl/glutamyl-tRNA(Asn/Gln) amidotransferase subunit B">
    <location>
        <begin position="1"/>
        <end position="482"/>
    </location>
</feature>
<protein>
    <recommendedName>
        <fullName evidence="1">Aspartyl/glutamyl-tRNA(Asn/Gln) amidotransferase subunit B</fullName>
        <shortName evidence="1">Asp/Glu-ADT subunit B</shortName>
        <ecNumber evidence="1">6.3.5.-</ecNumber>
    </recommendedName>
</protein>